<sequence>MSSNILAMVAMQLLLIRIVSSQNVTNEYLNHQCNNTQGTYTRGSTFEKNLNQVIRNISHLHLRYGYTYNSNVEAYEVSKDPNIVFVLLQCRGDSYGSKCHSCLHTAFSGLRERCRGNKGAIIWYDQCVLEISSVNTKGRIRYDSFFNMTNVKNVSSNAEQFKNKRKDLFHKLLLGATKDVSDSNDAYAVGETRIGRNKMYAMMQCALDLTTNGCYVCLEWIIGRYDSFYFDRRQGTRVLSRSCSLRYELYPFLRR</sequence>
<accession>Q9LJW2</accession>
<evidence type="ECO:0000255" key="1"/>
<evidence type="ECO:0000255" key="2">
    <source>
        <dbReference type="PROSITE-ProRule" id="PRU00806"/>
    </source>
</evidence>
<evidence type="ECO:0000305" key="3"/>
<proteinExistence type="inferred from homology"/>
<name>CRR13_ARATH</name>
<keyword id="KW-1185">Reference proteome</keyword>
<keyword id="KW-0677">Repeat</keyword>
<keyword id="KW-0964">Secreted</keyword>
<keyword id="KW-0732">Signal</keyword>
<reference key="1">
    <citation type="journal article" date="2000" name="DNA Res.">
        <title>Structural analysis of Arabidopsis thaliana chromosome 3. II. Sequence features of the 4,251,695 bp regions covered by 90 P1, TAC and BAC clones.</title>
        <authorList>
            <person name="Kaneko T."/>
            <person name="Katoh T."/>
            <person name="Sato S."/>
            <person name="Nakamura Y."/>
            <person name="Asamizu E."/>
            <person name="Tabata S."/>
        </authorList>
    </citation>
    <scope>NUCLEOTIDE SEQUENCE [LARGE SCALE GENOMIC DNA]</scope>
    <source>
        <strain>cv. Columbia</strain>
    </source>
</reference>
<reference key="2">
    <citation type="journal article" date="2017" name="Plant J.">
        <title>Araport11: a complete reannotation of the Arabidopsis thaliana reference genome.</title>
        <authorList>
            <person name="Cheng C.Y."/>
            <person name="Krishnakumar V."/>
            <person name="Chan A.P."/>
            <person name="Thibaud-Nissen F."/>
            <person name="Schobel S."/>
            <person name="Town C.D."/>
        </authorList>
    </citation>
    <scope>GENOME REANNOTATION</scope>
    <source>
        <strain>cv. Columbia</strain>
    </source>
</reference>
<reference key="3">
    <citation type="journal article" date="2001" name="Plant Physiol.">
        <title>A superfamily of proteins with novel cysteine-rich repeats.</title>
        <authorList>
            <person name="Chen Z."/>
        </authorList>
    </citation>
    <scope>GENE FAMILY ORGANIZATION</scope>
    <scope>NOMENCLATURE</scope>
</reference>
<protein>
    <recommendedName>
        <fullName>Putative cysteine-rich repeat secretory protein 13</fullName>
    </recommendedName>
</protein>
<dbReference type="EMBL" id="AP000388">
    <property type="protein sequence ID" value="BAB02946.1"/>
    <property type="molecule type" value="Genomic_DNA"/>
</dbReference>
<dbReference type="EMBL" id="CP002686">
    <property type="protein sequence ID" value="AEE77528.1"/>
    <property type="molecule type" value="Genomic_DNA"/>
</dbReference>
<dbReference type="RefSeq" id="NP_189547.2">
    <property type="nucleotide sequence ID" value="NM_113826.3"/>
</dbReference>
<dbReference type="SMR" id="Q9LJW2"/>
<dbReference type="STRING" id="3702.Q9LJW2"/>
<dbReference type="PaxDb" id="3702-AT3G29040.1"/>
<dbReference type="ProteomicsDB" id="220489"/>
<dbReference type="EnsemblPlants" id="AT3G29040.1">
    <property type="protein sequence ID" value="AT3G29040.1"/>
    <property type="gene ID" value="AT3G29040"/>
</dbReference>
<dbReference type="GeneID" id="822548"/>
<dbReference type="Gramene" id="AT3G29040.1">
    <property type="protein sequence ID" value="AT3G29040.1"/>
    <property type="gene ID" value="AT3G29040"/>
</dbReference>
<dbReference type="KEGG" id="ath:AT3G29040"/>
<dbReference type="Araport" id="AT3G29040"/>
<dbReference type="TAIR" id="AT3G29040"/>
<dbReference type="eggNOG" id="ENOG502QPWH">
    <property type="taxonomic scope" value="Eukaryota"/>
</dbReference>
<dbReference type="HOGENOM" id="CLU_000288_35_0_1"/>
<dbReference type="InParanoid" id="Q9LJW2"/>
<dbReference type="OMA" id="KGEMMIG"/>
<dbReference type="PhylomeDB" id="Q9LJW2"/>
<dbReference type="PRO" id="PR:Q9LJW2"/>
<dbReference type="Proteomes" id="UP000006548">
    <property type="component" value="Chromosome 3"/>
</dbReference>
<dbReference type="ExpressionAtlas" id="Q9LJW2">
    <property type="expression patterns" value="baseline"/>
</dbReference>
<dbReference type="GO" id="GO:0005576">
    <property type="term" value="C:extracellular region"/>
    <property type="evidence" value="ECO:0007669"/>
    <property type="project" value="UniProtKB-SubCell"/>
</dbReference>
<dbReference type="CDD" id="cd23509">
    <property type="entry name" value="Gnk2-like"/>
    <property type="match status" value="2"/>
</dbReference>
<dbReference type="Gene3D" id="3.30.430.20">
    <property type="entry name" value="Gnk2 domain, C-X8-C-X2-C motif"/>
    <property type="match status" value="2"/>
</dbReference>
<dbReference type="InterPro" id="IPR050581">
    <property type="entry name" value="CRR_secretory_protein"/>
</dbReference>
<dbReference type="InterPro" id="IPR002902">
    <property type="entry name" value="GNK2"/>
</dbReference>
<dbReference type="InterPro" id="IPR038408">
    <property type="entry name" value="GNK2_sf"/>
</dbReference>
<dbReference type="PANTHER" id="PTHR32411:SF70">
    <property type="entry name" value="CYSTEINE-RICH REPEAT SECRETORY PROTEIN 26-RELATED"/>
    <property type="match status" value="1"/>
</dbReference>
<dbReference type="PANTHER" id="PTHR32411">
    <property type="entry name" value="CYSTEINE-RICH REPEAT SECRETORY PROTEIN 38-RELATED"/>
    <property type="match status" value="1"/>
</dbReference>
<dbReference type="Pfam" id="PF01657">
    <property type="entry name" value="Stress-antifung"/>
    <property type="match status" value="2"/>
</dbReference>
<dbReference type="PROSITE" id="PS51473">
    <property type="entry name" value="GNK2"/>
    <property type="match status" value="2"/>
</dbReference>
<feature type="signal peptide" evidence="1">
    <location>
        <begin position="1"/>
        <end position="21"/>
    </location>
</feature>
<feature type="chain" id="PRO_0000296141" description="Putative cysteine-rich repeat secretory protein 13">
    <location>
        <begin position="22"/>
        <end position="255"/>
    </location>
</feature>
<feature type="domain" description="Gnk2-homologous 1" evidence="2">
    <location>
        <begin position="28"/>
        <end position="136"/>
    </location>
</feature>
<feature type="domain" description="Gnk2-homologous 2" evidence="2">
    <location>
        <begin position="142"/>
        <end position="252"/>
    </location>
</feature>
<organism>
    <name type="scientific">Arabidopsis thaliana</name>
    <name type="common">Mouse-ear cress</name>
    <dbReference type="NCBI Taxonomy" id="3702"/>
    <lineage>
        <taxon>Eukaryota</taxon>
        <taxon>Viridiplantae</taxon>
        <taxon>Streptophyta</taxon>
        <taxon>Embryophyta</taxon>
        <taxon>Tracheophyta</taxon>
        <taxon>Spermatophyta</taxon>
        <taxon>Magnoliopsida</taxon>
        <taxon>eudicotyledons</taxon>
        <taxon>Gunneridae</taxon>
        <taxon>Pentapetalae</taxon>
        <taxon>rosids</taxon>
        <taxon>malvids</taxon>
        <taxon>Brassicales</taxon>
        <taxon>Brassicaceae</taxon>
        <taxon>Camelineae</taxon>
        <taxon>Arabidopsis</taxon>
    </lineage>
</organism>
<gene>
    <name type="primary">CRRSP13</name>
    <name type="ordered locus">At3g29040</name>
    <name type="ORF">MRI12.2</name>
</gene>
<comment type="subcellular location">
    <subcellularLocation>
        <location evidence="3">Secreted</location>
    </subcellularLocation>
</comment>
<comment type="similarity">
    <text evidence="3">Belongs to the cysteine-rich repeat secretory protein family.</text>
</comment>